<accession>Q9LXC9</accession>
<accession>Q8LBD6</accession>
<sequence length="300" mass="33380">MAATRVLTAATAVTQTTSCFLAKQAFTLPAKKSCGGFGGLCFSRRALVLKSKRPFSCSAIYNPQVKVQEEGPAESLDYRVFFLDGSGKKVSPWHDIPLTLGDGVFNFIVEIPKESKAKMEVATDEDFTPIKQDTKKGKLRYYPYNINWNYGLLPQTWEDPSHANSEVEGCFGDNDPVDVVEIGETQRKIGDILKIKPLAALAMIDEGELDWKIVAISLDDPKAHLVNDVEDVEKHFPGTLTAIRDWFRDYKIPDGKPANRFGLGDKPANKDYALKIIQETNESWAKLVKRSVDAGDLSLY</sequence>
<comment type="catalytic activity">
    <reaction evidence="7 8">
        <text>diphosphate + H2O = 2 phosphate + H(+)</text>
        <dbReference type="Rhea" id="RHEA:24576"/>
        <dbReference type="ChEBI" id="CHEBI:15377"/>
        <dbReference type="ChEBI" id="CHEBI:15378"/>
        <dbReference type="ChEBI" id="CHEBI:33019"/>
        <dbReference type="ChEBI" id="CHEBI:43474"/>
        <dbReference type="EC" id="3.6.1.1"/>
    </reaction>
</comment>
<comment type="cofactor">
    <cofactor evidence="2">
        <name>Mg(2+)</name>
        <dbReference type="ChEBI" id="CHEBI:18420"/>
    </cofactor>
</comment>
<comment type="activity regulation">
    <text evidence="7">Inhibited by NaF.</text>
</comment>
<comment type="biophysicochemical properties">
    <kinetics>
        <KM evidence="7">0.6 mM for PPi</KM>
    </kinetics>
    <phDependence>
        <text evidence="7">Optimum pH is 7.5. Activity is extremely low below pH 6.5. Activity decreases slightly at more basic pHs, activity at pH 9.0 was only 10% less than that found at pH 7.5.</text>
    </phDependence>
</comment>
<comment type="subcellular location">
    <subcellularLocation>
        <location evidence="7">Plastid</location>
        <location evidence="7">Chloroplast stroma</location>
    </subcellularLocation>
</comment>
<comment type="tissue specificity">
    <text evidence="7 10">Expressed in all tissues tested. Highest expression in flowers, leaves and roots. Lower levels of expression in siliques, stems, ovary, stigma and pollen.</text>
</comment>
<comment type="developmental stage">
    <text evidence="10">Expressed throughout plant development, with a lower expression in young plantes and a maximum during flowering.</text>
</comment>
<comment type="induction">
    <text evidence="7">By glucose, frustose or sucrose at 300 mM, but not at 100 mM.</text>
</comment>
<comment type="similarity">
    <text evidence="11">Belongs to the PPase family.</text>
</comment>
<evidence type="ECO:0000250" key="1">
    <source>
        <dbReference type="UniProtKB" id="P00817"/>
    </source>
</evidence>
<evidence type="ECO:0000250" key="2">
    <source>
        <dbReference type="UniProtKB" id="P0A7A9"/>
    </source>
</evidence>
<evidence type="ECO:0000255" key="3"/>
<evidence type="ECO:0000269" key="4">
    <source>
    </source>
</evidence>
<evidence type="ECO:0000269" key="5">
    <source>
    </source>
</evidence>
<evidence type="ECO:0000269" key="6">
    <source>
    </source>
</evidence>
<evidence type="ECO:0000269" key="7">
    <source>
    </source>
</evidence>
<evidence type="ECO:0000269" key="8">
    <source>
    </source>
</evidence>
<evidence type="ECO:0000303" key="9">
    <source>
    </source>
</evidence>
<evidence type="ECO:0000303" key="10">
    <source ref="8"/>
</evidence>
<evidence type="ECO:0000305" key="11"/>
<evidence type="ECO:0000312" key="12">
    <source>
        <dbReference type="Araport" id="AT5G09650"/>
    </source>
</evidence>
<evidence type="ECO:0000312" key="13">
    <source>
        <dbReference type="EMBL" id="AAK76619.1"/>
    </source>
</evidence>
<evidence type="ECO:0000312" key="14">
    <source>
        <dbReference type="EMBL" id="AAM64828.1"/>
    </source>
</evidence>
<evidence type="ECO:0000312" key="15">
    <source>
        <dbReference type="EMBL" id="CAB89365.1"/>
    </source>
</evidence>
<evidence type="ECO:0000312" key="16">
    <source>
        <dbReference type="EMBL" id="CAC19853.1"/>
    </source>
</evidence>
<feature type="transit peptide" description="Chloroplast" evidence="3">
    <location>
        <begin position="1"/>
        <end position="66"/>
    </location>
</feature>
<feature type="chain" id="PRO_0000253937" description="Soluble inorganic pyrophosphatase 6, chloroplastic">
    <location>
        <begin position="67"/>
        <end position="300"/>
    </location>
</feature>
<feature type="active site" description="Proton donor" evidence="1">
    <location>
        <position position="142"/>
    </location>
</feature>
<feature type="binding site" evidence="1">
    <location>
        <position position="140"/>
    </location>
    <ligand>
        <name>diphosphate</name>
        <dbReference type="ChEBI" id="CHEBI:33019"/>
    </ligand>
</feature>
<feature type="binding site" evidence="2">
    <location>
        <position position="173"/>
    </location>
    <ligand>
        <name>Mg(2+)</name>
        <dbReference type="ChEBI" id="CHEBI:18420"/>
        <label>1</label>
    </ligand>
</feature>
<feature type="binding site" evidence="2">
    <location>
        <position position="178"/>
    </location>
    <ligand>
        <name>Mg(2+)</name>
        <dbReference type="ChEBI" id="CHEBI:18420"/>
        <label>1</label>
    </ligand>
</feature>
<feature type="binding site" evidence="2">
    <location>
        <position position="178"/>
    </location>
    <ligand>
        <name>Mg(2+)</name>
        <dbReference type="ChEBI" id="CHEBI:18420"/>
        <label>2</label>
    </ligand>
</feature>
<feature type="binding site" evidence="2">
    <location>
        <position position="210"/>
    </location>
    <ligand>
        <name>Mg(2+)</name>
        <dbReference type="ChEBI" id="CHEBI:18420"/>
        <label>1</label>
    </ligand>
</feature>
<feature type="sequence conflict" description="In Ref. 7; AAM64828." evidence="11" ref="7">
    <original>K</original>
    <variation>N</variation>
    <location>
        <position position="194"/>
    </location>
</feature>
<feature type="sequence conflict" description="In Ref. 7; AAM64828." evidence="11" ref="7">
    <original>K</original>
    <variation>R</variation>
    <location>
        <position position="270"/>
    </location>
</feature>
<name>IPYR6_ARATH</name>
<proteinExistence type="evidence at protein level"/>
<reference key="1">
    <citation type="journal article" date="2004" name="FEBS Lett.">
        <title>Identification of an Arabidopsis inorganic pyrophosphatase capable of being imported into chloroplasts.</title>
        <authorList>
            <person name="Schulze S."/>
            <person name="Mant A."/>
            <person name="Kossmann J."/>
            <person name="Lloyd J.R."/>
        </authorList>
    </citation>
    <scope>NUCLEOTIDE SEQUENCE [MRNA]</scope>
    <scope>CATALYTIC ACTIVITY</scope>
    <scope>ACTIVITY REGULATION</scope>
    <scope>BIOPHYSICOCHEMICAL PROPERTIES</scope>
    <scope>SUBCELLULAR LOCATION</scope>
    <scope>TISSUE SPECIFICITY</scope>
    <scope>INDUCTION</scope>
    <scope>GENE FAMILY</scope>
    <scope>NOMENCLATURE</scope>
</reference>
<reference key="2">
    <citation type="journal article" date="2006" name="Biochem. J.">
        <title>A novel subfamily of monomeric inorganic pyrophosphatases in photosynthetic eukaryotes.</title>
        <authorList>
            <person name="Gomez-Garcia M.R."/>
            <person name="Losada M."/>
            <person name="Serrano A."/>
        </authorList>
    </citation>
    <scope>NUCLEOTIDE SEQUENCE [MRNA]</scope>
    <scope>CATALYTIC ACTIVITY</scope>
    <source>
        <strain>cv. Columbia</strain>
        <tissue>Leaf</tissue>
    </source>
</reference>
<reference key="3">
    <citation type="journal article" date="1999" name="DNA Res.">
        <title>Structural analysis of Arabidopsis thaliana chromosome 5. IX. Sequence features of the regions of 1,011,550 bp covered by seventeen P1 and TAC clones.</title>
        <authorList>
            <person name="Kaneko T."/>
            <person name="Katoh T."/>
            <person name="Sato S."/>
            <person name="Nakamura Y."/>
            <person name="Asamizu E."/>
            <person name="Kotani H."/>
            <person name="Miyajima N."/>
            <person name="Tabata S."/>
        </authorList>
    </citation>
    <scope>NUCLEOTIDE SEQUENCE [LARGE SCALE GENOMIC DNA]</scope>
    <source>
        <strain evidence="4">cv. Columbia</strain>
    </source>
</reference>
<reference evidence="15" key="4">
    <citation type="journal article" date="2000" name="Nature">
        <title>Sequence and analysis of chromosome 5 of the plant Arabidopsis thaliana.</title>
        <authorList>
            <person name="Tabata S."/>
            <person name="Kaneko T."/>
            <person name="Nakamura Y."/>
            <person name="Kotani H."/>
            <person name="Kato T."/>
            <person name="Asamizu E."/>
            <person name="Miyajima N."/>
            <person name="Sasamoto S."/>
            <person name="Kimura T."/>
            <person name="Hosouchi T."/>
            <person name="Kawashima K."/>
            <person name="Kohara M."/>
            <person name="Matsumoto M."/>
            <person name="Matsuno A."/>
            <person name="Muraki A."/>
            <person name="Nakayama S."/>
            <person name="Nakazaki N."/>
            <person name="Naruo K."/>
            <person name="Okumura S."/>
            <person name="Shinpo S."/>
            <person name="Takeuchi C."/>
            <person name="Wada T."/>
            <person name="Watanabe A."/>
            <person name="Yamada M."/>
            <person name="Yasuda M."/>
            <person name="Sato S."/>
            <person name="de la Bastide M."/>
            <person name="Huang E."/>
            <person name="Spiegel L."/>
            <person name="Gnoj L."/>
            <person name="O'Shaughnessy A."/>
            <person name="Preston R."/>
            <person name="Habermann K."/>
            <person name="Murray J."/>
            <person name="Johnson D."/>
            <person name="Rohlfing T."/>
            <person name="Nelson J."/>
            <person name="Stoneking T."/>
            <person name="Pepin K."/>
            <person name="Spieth J."/>
            <person name="Sekhon M."/>
            <person name="Armstrong J."/>
            <person name="Becker M."/>
            <person name="Belter E."/>
            <person name="Cordum H."/>
            <person name="Cordes M."/>
            <person name="Courtney L."/>
            <person name="Courtney W."/>
            <person name="Dante M."/>
            <person name="Du H."/>
            <person name="Edwards J."/>
            <person name="Fryman J."/>
            <person name="Haakensen B."/>
            <person name="Lamar E."/>
            <person name="Latreille P."/>
            <person name="Leonard S."/>
            <person name="Meyer R."/>
            <person name="Mulvaney E."/>
            <person name="Ozersky P."/>
            <person name="Riley A."/>
            <person name="Strowmatt C."/>
            <person name="Wagner-McPherson C."/>
            <person name="Wollam A."/>
            <person name="Yoakum M."/>
            <person name="Bell M."/>
            <person name="Dedhia N."/>
            <person name="Parnell L."/>
            <person name="Shah R."/>
            <person name="Rodriguez M."/>
            <person name="Hoon See L."/>
            <person name="Vil D."/>
            <person name="Baker J."/>
            <person name="Kirchoff K."/>
            <person name="Toth K."/>
            <person name="King L."/>
            <person name="Bahret A."/>
            <person name="Miller B."/>
            <person name="Marra M.A."/>
            <person name="Martienssen R."/>
            <person name="McCombie W.R."/>
            <person name="Wilson R.K."/>
            <person name="Murphy G."/>
            <person name="Bancroft I."/>
            <person name="Volckaert G."/>
            <person name="Wambutt R."/>
            <person name="Duesterhoeft A."/>
            <person name="Stiekema W."/>
            <person name="Pohl T."/>
            <person name="Entian K.-D."/>
            <person name="Terryn N."/>
            <person name="Hartley N."/>
            <person name="Bent E."/>
            <person name="Johnson S."/>
            <person name="Langham S.-A."/>
            <person name="McCullagh B."/>
            <person name="Robben J."/>
            <person name="Grymonprez B."/>
            <person name="Zimmermann W."/>
            <person name="Ramsperger U."/>
            <person name="Wedler H."/>
            <person name="Balke K."/>
            <person name="Wedler E."/>
            <person name="Peters S."/>
            <person name="van Staveren M."/>
            <person name="Dirkse W."/>
            <person name="Mooijman P."/>
            <person name="Klein Lankhorst R."/>
            <person name="Weitzenegger T."/>
            <person name="Bothe G."/>
            <person name="Rose M."/>
            <person name="Hauf J."/>
            <person name="Berneiser S."/>
            <person name="Hempel S."/>
            <person name="Feldpausch M."/>
            <person name="Lamberth S."/>
            <person name="Villarroel R."/>
            <person name="Gielen J."/>
            <person name="Ardiles W."/>
            <person name="Bents O."/>
            <person name="Lemcke K."/>
            <person name="Kolesov G."/>
            <person name="Mayer K.F.X."/>
            <person name="Rudd S."/>
            <person name="Schoof H."/>
            <person name="Schueller C."/>
            <person name="Zaccaria P."/>
            <person name="Mewes H.-W."/>
            <person name="Bevan M."/>
            <person name="Fransz P.F."/>
        </authorList>
    </citation>
    <scope>NUCLEOTIDE SEQUENCE [LARGE SCALE GENOMIC DNA]</scope>
    <source>
        <strain evidence="5">cv. Columbia</strain>
    </source>
</reference>
<reference evidence="14" key="5">
    <citation type="journal article" date="2017" name="Plant J.">
        <title>Araport11: a complete reannotation of the Arabidopsis thaliana reference genome.</title>
        <authorList>
            <person name="Cheng C.Y."/>
            <person name="Krishnakumar V."/>
            <person name="Chan A.P."/>
            <person name="Thibaud-Nissen F."/>
            <person name="Schobel S."/>
            <person name="Town C.D."/>
        </authorList>
    </citation>
    <scope>GENOME REANNOTATION</scope>
    <source>
        <strain>cv. Columbia</strain>
    </source>
</reference>
<reference evidence="13" key="6">
    <citation type="journal article" date="2003" name="Science">
        <title>Empirical analysis of transcriptional activity in the Arabidopsis genome.</title>
        <authorList>
            <person name="Yamada K."/>
            <person name="Lim J."/>
            <person name="Dale J.M."/>
            <person name="Chen H."/>
            <person name="Shinn P."/>
            <person name="Palm C.J."/>
            <person name="Southwick A.M."/>
            <person name="Wu H.C."/>
            <person name="Kim C.J."/>
            <person name="Nguyen M."/>
            <person name="Pham P.K."/>
            <person name="Cheuk R.F."/>
            <person name="Karlin-Newmann G."/>
            <person name="Liu S.X."/>
            <person name="Lam B."/>
            <person name="Sakano H."/>
            <person name="Wu T."/>
            <person name="Yu G."/>
            <person name="Miranda M."/>
            <person name="Quach H.L."/>
            <person name="Tripp M."/>
            <person name="Chang C.H."/>
            <person name="Lee J.M."/>
            <person name="Toriumi M.J."/>
            <person name="Chan M.M."/>
            <person name="Tang C.C."/>
            <person name="Onodera C.S."/>
            <person name="Deng J.M."/>
            <person name="Akiyama K."/>
            <person name="Ansari Y."/>
            <person name="Arakawa T."/>
            <person name="Banh J."/>
            <person name="Banno F."/>
            <person name="Bowser L."/>
            <person name="Brooks S.Y."/>
            <person name="Carninci P."/>
            <person name="Chao Q."/>
            <person name="Choy N."/>
            <person name="Enju A."/>
            <person name="Goldsmith A.D."/>
            <person name="Gurjal M."/>
            <person name="Hansen N.F."/>
            <person name="Hayashizaki Y."/>
            <person name="Johnson-Hopson C."/>
            <person name="Hsuan V.W."/>
            <person name="Iida K."/>
            <person name="Karnes M."/>
            <person name="Khan S."/>
            <person name="Koesema E."/>
            <person name="Ishida J."/>
            <person name="Jiang P.X."/>
            <person name="Jones T."/>
            <person name="Kawai J."/>
            <person name="Kamiya A."/>
            <person name="Meyers C."/>
            <person name="Nakajima M."/>
            <person name="Narusaka M."/>
            <person name="Seki M."/>
            <person name="Sakurai T."/>
            <person name="Satou M."/>
            <person name="Tamse R."/>
            <person name="Vaysberg M."/>
            <person name="Wallender E.K."/>
            <person name="Wong C."/>
            <person name="Yamamura Y."/>
            <person name="Yuan S."/>
            <person name="Shinozaki K."/>
            <person name="Davis R.W."/>
            <person name="Theologis A."/>
            <person name="Ecker J.R."/>
        </authorList>
    </citation>
    <scope>NUCLEOTIDE SEQUENCE [LARGE SCALE MRNA]</scope>
    <source>
        <strain evidence="6">cv. Columbia</strain>
    </source>
</reference>
<reference evidence="14" key="7">
    <citation type="submission" date="2002-03" db="EMBL/GenBank/DDBJ databases">
        <title>Full-length cDNA from Arabidopsis thaliana.</title>
        <authorList>
            <person name="Brover V.V."/>
            <person name="Troukhan M.E."/>
            <person name="Alexandrov N.A."/>
            <person name="Lu Y.-P."/>
            <person name="Flavell R.B."/>
            <person name="Feldmann K.A."/>
        </authorList>
    </citation>
    <scope>NUCLEOTIDE SEQUENCE [LARGE SCALE MRNA]</scope>
</reference>
<reference key="8">
    <citation type="journal article" date="2007" name="Plant Sci.">
        <title>Characterization of two soluble inorganic pyrophosphatases from Arabidopsis thaliana.</title>
        <authorList>
            <person name="Navarro-De la Sancha E."/>
            <person name="Coello-Coutino M.P."/>
            <person name="Valencia-Turcotte L.G."/>
            <person name="Hernandez-Dominguez E.E."/>
            <person name="Trejo-Yepes G."/>
            <person name="Rodriguez-Sotres R."/>
        </authorList>
    </citation>
    <scope>TISSUE SPECIFICITY</scope>
    <scope>DEVELOPMENTAL STAGE</scope>
    <source>
        <strain>cv. Columbia</strain>
    </source>
</reference>
<protein>
    <recommendedName>
        <fullName evidence="9">Soluble inorganic pyrophosphatase 6, chloroplastic</fullName>
        <ecNumber evidence="7">3.6.1.1</ecNumber>
    </recommendedName>
    <alternativeName>
        <fullName>Inorganic pyrophosphatase 6</fullName>
    </alternativeName>
    <alternativeName>
        <fullName evidence="9">Pyrophosphate phospho-hydrolase 6</fullName>
        <shortName evidence="9">PPase 6</shortName>
    </alternativeName>
</protein>
<keyword id="KW-0150">Chloroplast</keyword>
<keyword id="KW-0378">Hydrolase</keyword>
<keyword id="KW-0460">Magnesium</keyword>
<keyword id="KW-0479">Metal-binding</keyword>
<keyword id="KW-0934">Plastid</keyword>
<keyword id="KW-1185">Reference proteome</keyword>
<keyword id="KW-0809">Transit peptide</keyword>
<gene>
    <name evidence="9" type="primary">PPA6</name>
    <name evidence="16" type="synonym">PPA</name>
    <name evidence="12" type="ordered locus">At5g09650</name>
    <name evidence="15" type="ORF">F17I14.160</name>
</gene>
<organism>
    <name type="scientific">Arabidopsis thaliana</name>
    <name type="common">Mouse-ear cress</name>
    <dbReference type="NCBI Taxonomy" id="3702"/>
    <lineage>
        <taxon>Eukaryota</taxon>
        <taxon>Viridiplantae</taxon>
        <taxon>Streptophyta</taxon>
        <taxon>Embryophyta</taxon>
        <taxon>Tracheophyta</taxon>
        <taxon>Spermatophyta</taxon>
        <taxon>Magnoliopsida</taxon>
        <taxon>eudicotyledons</taxon>
        <taxon>Gunneridae</taxon>
        <taxon>Pentapetalae</taxon>
        <taxon>rosids</taxon>
        <taxon>malvids</taxon>
        <taxon>Brassicales</taxon>
        <taxon>Brassicaceae</taxon>
        <taxon>Camelineae</taxon>
        <taxon>Arabidopsis</taxon>
    </lineage>
</organism>
<dbReference type="EC" id="3.6.1.1" evidence="7"/>
<dbReference type="EMBL" id="AY551439">
    <property type="protein sequence ID" value="AAS57950.1"/>
    <property type="molecule type" value="mRNA"/>
</dbReference>
<dbReference type="EMBL" id="AJ252210">
    <property type="protein sequence ID" value="CAC19853.1"/>
    <property type="molecule type" value="mRNA"/>
</dbReference>
<dbReference type="EMBL" id="AB020752">
    <property type="protein sequence ID" value="BAB09520.1"/>
    <property type="molecule type" value="Genomic_DNA"/>
</dbReference>
<dbReference type="EMBL" id="AL353994">
    <property type="protein sequence ID" value="CAB89365.1"/>
    <property type="molecule type" value="Genomic_DNA"/>
</dbReference>
<dbReference type="EMBL" id="CP002688">
    <property type="protein sequence ID" value="AED91421.1"/>
    <property type="molecule type" value="Genomic_DNA"/>
</dbReference>
<dbReference type="EMBL" id="AY045945">
    <property type="protein sequence ID" value="AAK76619.1"/>
    <property type="molecule type" value="mRNA"/>
</dbReference>
<dbReference type="EMBL" id="AY079355">
    <property type="protein sequence ID" value="AAL85086.1"/>
    <property type="molecule type" value="mRNA"/>
</dbReference>
<dbReference type="EMBL" id="AY087275">
    <property type="protein sequence ID" value="AAM64828.1"/>
    <property type="molecule type" value="mRNA"/>
</dbReference>
<dbReference type="PIR" id="T49933">
    <property type="entry name" value="T49933"/>
</dbReference>
<dbReference type="RefSeq" id="NP_196527.1">
    <property type="nucleotide sequence ID" value="NM_121002.3"/>
</dbReference>
<dbReference type="SMR" id="Q9LXC9"/>
<dbReference type="BioGRID" id="16102">
    <property type="interactions" value="2"/>
</dbReference>
<dbReference type="FunCoup" id="Q9LXC9">
    <property type="interactions" value="3526"/>
</dbReference>
<dbReference type="IntAct" id="Q9LXC9">
    <property type="interactions" value="1"/>
</dbReference>
<dbReference type="STRING" id="3702.Q9LXC9"/>
<dbReference type="iPTMnet" id="Q9LXC9"/>
<dbReference type="MetOSite" id="Q9LXC9"/>
<dbReference type="SwissPalm" id="Q9LXC9"/>
<dbReference type="PaxDb" id="3702-AT5G09650.1"/>
<dbReference type="ProteomicsDB" id="247221"/>
<dbReference type="EnsemblPlants" id="AT5G09650.1">
    <property type="protein sequence ID" value="AT5G09650.1"/>
    <property type="gene ID" value="AT5G09650"/>
</dbReference>
<dbReference type="GeneID" id="830824"/>
<dbReference type="Gramene" id="AT5G09650.1">
    <property type="protein sequence ID" value="AT5G09650.1"/>
    <property type="gene ID" value="AT5G09650"/>
</dbReference>
<dbReference type="KEGG" id="ath:AT5G09650"/>
<dbReference type="Araport" id="AT5G09650"/>
<dbReference type="TAIR" id="AT5G09650">
    <property type="gene designation" value="PPA6"/>
</dbReference>
<dbReference type="eggNOG" id="KOG1626">
    <property type="taxonomic scope" value="Eukaryota"/>
</dbReference>
<dbReference type="HOGENOM" id="CLU_040684_0_0_1"/>
<dbReference type="InParanoid" id="Q9LXC9"/>
<dbReference type="OMA" id="LYANEQK"/>
<dbReference type="OrthoDB" id="1608002at2759"/>
<dbReference type="PhylomeDB" id="Q9LXC9"/>
<dbReference type="BRENDA" id="3.6.1.1">
    <property type="organism ID" value="399"/>
</dbReference>
<dbReference type="CD-CODE" id="4299E36E">
    <property type="entry name" value="Nucleolus"/>
</dbReference>
<dbReference type="PRO" id="PR:Q9LXC9"/>
<dbReference type="Proteomes" id="UP000006548">
    <property type="component" value="Chromosome 5"/>
</dbReference>
<dbReference type="ExpressionAtlas" id="Q9LXC9">
    <property type="expression patterns" value="baseline and differential"/>
</dbReference>
<dbReference type="GO" id="GO:0009507">
    <property type="term" value="C:chloroplast"/>
    <property type="evidence" value="ECO:0007005"/>
    <property type="project" value="TAIR"/>
</dbReference>
<dbReference type="GO" id="GO:0009941">
    <property type="term" value="C:chloroplast envelope"/>
    <property type="evidence" value="ECO:0007005"/>
    <property type="project" value="TAIR"/>
</dbReference>
<dbReference type="GO" id="GO:0009570">
    <property type="term" value="C:chloroplast stroma"/>
    <property type="evidence" value="ECO:0000314"/>
    <property type="project" value="TAIR"/>
</dbReference>
<dbReference type="GO" id="GO:0005886">
    <property type="term" value="C:plasma membrane"/>
    <property type="evidence" value="ECO:0007005"/>
    <property type="project" value="TAIR"/>
</dbReference>
<dbReference type="GO" id="GO:0009536">
    <property type="term" value="C:plastid"/>
    <property type="evidence" value="ECO:0007005"/>
    <property type="project" value="TAIR"/>
</dbReference>
<dbReference type="GO" id="GO:0009579">
    <property type="term" value="C:thylakoid"/>
    <property type="evidence" value="ECO:0007005"/>
    <property type="project" value="TAIR"/>
</dbReference>
<dbReference type="GO" id="GO:0004427">
    <property type="term" value="F:inorganic diphosphate phosphatase activity"/>
    <property type="evidence" value="ECO:0000314"/>
    <property type="project" value="UniProtKB"/>
</dbReference>
<dbReference type="GO" id="GO:0000287">
    <property type="term" value="F:magnesium ion binding"/>
    <property type="evidence" value="ECO:0007669"/>
    <property type="project" value="InterPro"/>
</dbReference>
<dbReference type="GO" id="GO:0006796">
    <property type="term" value="P:phosphate-containing compound metabolic process"/>
    <property type="evidence" value="ECO:0007669"/>
    <property type="project" value="InterPro"/>
</dbReference>
<dbReference type="CDD" id="cd00412">
    <property type="entry name" value="pyrophosphatase"/>
    <property type="match status" value="1"/>
</dbReference>
<dbReference type="FunFam" id="3.90.80.10:FF:000007">
    <property type="entry name" value="Inorganic pyrophosphatase, mitochondrial"/>
    <property type="match status" value="1"/>
</dbReference>
<dbReference type="Gene3D" id="3.90.80.10">
    <property type="entry name" value="Inorganic pyrophosphatase"/>
    <property type="match status" value="1"/>
</dbReference>
<dbReference type="InterPro" id="IPR008162">
    <property type="entry name" value="Pyrophosphatase"/>
</dbReference>
<dbReference type="InterPro" id="IPR036649">
    <property type="entry name" value="Pyrophosphatase_sf"/>
</dbReference>
<dbReference type="PANTHER" id="PTHR10286">
    <property type="entry name" value="INORGANIC PYROPHOSPHATASE"/>
    <property type="match status" value="1"/>
</dbReference>
<dbReference type="Pfam" id="PF00719">
    <property type="entry name" value="Pyrophosphatase"/>
    <property type="match status" value="1"/>
</dbReference>
<dbReference type="SUPFAM" id="SSF50324">
    <property type="entry name" value="Inorganic pyrophosphatase"/>
    <property type="match status" value="1"/>
</dbReference>
<dbReference type="PROSITE" id="PS00387">
    <property type="entry name" value="PPASE"/>
    <property type="match status" value="1"/>
</dbReference>